<feature type="chain" id="PRO_0000171827" description="Putative membrane protein insertion efficiency factor">
    <location>
        <begin position="1"/>
        <end position="78"/>
    </location>
</feature>
<comment type="function">
    <text evidence="1">Could be involved in insertion of integral membrane proteins into the membrane.</text>
</comment>
<comment type="subcellular location">
    <subcellularLocation>
        <location evidence="1">Cell inner membrane</location>
        <topology evidence="1">Peripheral membrane protein</topology>
        <orientation evidence="1">Cytoplasmic side</orientation>
    </subcellularLocation>
</comment>
<comment type="similarity">
    <text evidence="1">Belongs to the UPF0161 family.</text>
</comment>
<reference key="1">
    <citation type="journal article" date="2003" name="DNA Res.">
        <title>Complete genome structure of Gloeobacter violaceus PCC 7421, a cyanobacterium that lacks thylakoids.</title>
        <authorList>
            <person name="Nakamura Y."/>
            <person name="Kaneko T."/>
            <person name="Sato S."/>
            <person name="Mimuro M."/>
            <person name="Miyashita H."/>
            <person name="Tsuchiya T."/>
            <person name="Sasamoto S."/>
            <person name="Watanabe A."/>
            <person name="Kawashima K."/>
            <person name="Kishida Y."/>
            <person name="Kiyokawa C."/>
            <person name="Kohara M."/>
            <person name="Matsumoto M."/>
            <person name="Matsuno A."/>
            <person name="Nakazaki N."/>
            <person name="Shimpo S."/>
            <person name="Takeuchi C."/>
            <person name="Yamada M."/>
            <person name="Tabata S."/>
        </authorList>
    </citation>
    <scope>NUCLEOTIDE SEQUENCE [LARGE SCALE GENOMIC DNA]</scope>
    <source>
        <strain>ATCC 29082 / PCC 7421</strain>
    </source>
</reference>
<evidence type="ECO:0000255" key="1">
    <source>
        <dbReference type="HAMAP-Rule" id="MF_00386"/>
    </source>
</evidence>
<keyword id="KW-0997">Cell inner membrane</keyword>
<keyword id="KW-1003">Cell membrane</keyword>
<keyword id="KW-0472">Membrane</keyword>
<keyword id="KW-1185">Reference proteome</keyword>
<protein>
    <recommendedName>
        <fullName evidence="1">Putative membrane protein insertion efficiency factor</fullName>
    </recommendedName>
</protein>
<sequence>MELVRRAATGAIRFYQRFVSPLTPPTCRYVPTCSEYTRQAIERFGVAAGIWLGTKRLCRCHPLHPGGYDPVPERRSVR</sequence>
<dbReference type="EMBL" id="BA000045">
    <property type="protein sequence ID" value="BAC89854.1"/>
    <property type="molecule type" value="Genomic_DNA"/>
</dbReference>
<dbReference type="RefSeq" id="NP_924859.1">
    <property type="nucleotide sequence ID" value="NC_005125.1"/>
</dbReference>
<dbReference type="RefSeq" id="WP_011141911.1">
    <property type="nucleotide sequence ID" value="NC_005125.1"/>
</dbReference>
<dbReference type="FunCoup" id="Q7NJB9">
    <property type="interactions" value="22"/>
</dbReference>
<dbReference type="STRING" id="251221.gene:10759405"/>
<dbReference type="EnsemblBacteria" id="BAC89854">
    <property type="protein sequence ID" value="BAC89854"/>
    <property type="gene ID" value="BAC89854"/>
</dbReference>
<dbReference type="KEGG" id="gvi:gsl1913"/>
<dbReference type="PATRIC" id="fig|251221.4.peg.1946"/>
<dbReference type="eggNOG" id="COG0759">
    <property type="taxonomic scope" value="Bacteria"/>
</dbReference>
<dbReference type="HOGENOM" id="CLU_144811_6_0_3"/>
<dbReference type="InParanoid" id="Q7NJB9"/>
<dbReference type="OrthoDB" id="9801753at2"/>
<dbReference type="PhylomeDB" id="Q7NJB9"/>
<dbReference type="Proteomes" id="UP000000557">
    <property type="component" value="Chromosome"/>
</dbReference>
<dbReference type="GO" id="GO:0005886">
    <property type="term" value="C:plasma membrane"/>
    <property type="evidence" value="ECO:0007669"/>
    <property type="project" value="UniProtKB-SubCell"/>
</dbReference>
<dbReference type="HAMAP" id="MF_00386">
    <property type="entry name" value="UPF0161_YidD"/>
    <property type="match status" value="1"/>
</dbReference>
<dbReference type="InterPro" id="IPR002696">
    <property type="entry name" value="Membr_insert_effic_factor_YidD"/>
</dbReference>
<dbReference type="NCBIfam" id="TIGR00278">
    <property type="entry name" value="membrane protein insertion efficiency factor YidD"/>
    <property type="match status" value="1"/>
</dbReference>
<dbReference type="PANTHER" id="PTHR33383">
    <property type="entry name" value="MEMBRANE PROTEIN INSERTION EFFICIENCY FACTOR-RELATED"/>
    <property type="match status" value="1"/>
</dbReference>
<dbReference type="PANTHER" id="PTHR33383:SF1">
    <property type="entry name" value="MEMBRANE PROTEIN INSERTION EFFICIENCY FACTOR-RELATED"/>
    <property type="match status" value="1"/>
</dbReference>
<dbReference type="Pfam" id="PF01809">
    <property type="entry name" value="YidD"/>
    <property type="match status" value="1"/>
</dbReference>
<dbReference type="SMART" id="SM01234">
    <property type="entry name" value="Haemolytic"/>
    <property type="match status" value="1"/>
</dbReference>
<organism>
    <name type="scientific">Gloeobacter violaceus (strain ATCC 29082 / PCC 7421)</name>
    <dbReference type="NCBI Taxonomy" id="251221"/>
    <lineage>
        <taxon>Bacteria</taxon>
        <taxon>Bacillati</taxon>
        <taxon>Cyanobacteriota</taxon>
        <taxon>Cyanophyceae</taxon>
        <taxon>Gloeobacterales</taxon>
        <taxon>Gloeobacteraceae</taxon>
        <taxon>Gloeobacter</taxon>
    </lineage>
</organism>
<name>YIDD_GLOVI</name>
<proteinExistence type="inferred from homology"/>
<accession>Q7NJB9</accession>
<gene>
    <name type="ordered locus">gsl1913</name>
</gene>